<organism>
    <name type="scientific">Paraburkholderia phymatum (strain DSM 17167 / CIP 108236 / LMG 21445 / STM815)</name>
    <name type="common">Burkholderia phymatum</name>
    <dbReference type="NCBI Taxonomy" id="391038"/>
    <lineage>
        <taxon>Bacteria</taxon>
        <taxon>Pseudomonadati</taxon>
        <taxon>Pseudomonadota</taxon>
        <taxon>Betaproteobacteria</taxon>
        <taxon>Burkholderiales</taxon>
        <taxon>Burkholderiaceae</taxon>
        <taxon>Paraburkholderia</taxon>
    </lineage>
</organism>
<evidence type="ECO:0000255" key="1">
    <source>
        <dbReference type="HAMAP-Rule" id="MF_00061"/>
    </source>
</evidence>
<dbReference type="EC" id="2.7.1.148" evidence="1"/>
<dbReference type="EMBL" id="CP001043">
    <property type="protein sequence ID" value="ACC69509.1"/>
    <property type="molecule type" value="Genomic_DNA"/>
</dbReference>
<dbReference type="RefSeq" id="WP_012399736.1">
    <property type="nucleotide sequence ID" value="NC_010622.1"/>
</dbReference>
<dbReference type="SMR" id="B2JCP0"/>
<dbReference type="STRING" id="391038.Bphy_0316"/>
<dbReference type="KEGG" id="bph:Bphy_0316"/>
<dbReference type="eggNOG" id="COG1947">
    <property type="taxonomic scope" value="Bacteria"/>
</dbReference>
<dbReference type="HOGENOM" id="CLU_053057_3_0_4"/>
<dbReference type="OrthoDB" id="9809438at2"/>
<dbReference type="UniPathway" id="UPA00056">
    <property type="reaction ID" value="UER00094"/>
</dbReference>
<dbReference type="Proteomes" id="UP000001192">
    <property type="component" value="Chromosome 1"/>
</dbReference>
<dbReference type="GO" id="GO:0050515">
    <property type="term" value="F:4-(cytidine 5'-diphospho)-2-C-methyl-D-erythritol kinase activity"/>
    <property type="evidence" value="ECO:0007669"/>
    <property type="project" value="UniProtKB-UniRule"/>
</dbReference>
<dbReference type="GO" id="GO:0005524">
    <property type="term" value="F:ATP binding"/>
    <property type="evidence" value="ECO:0007669"/>
    <property type="project" value="UniProtKB-UniRule"/>
</dbReference>
<dbReference type="GO" id="GO:0019288">
    <property type="term" value="P:isopentenyl diphosphate biosynthetic process, methylerythritol 4-phosphate pathway"/>
    <property type="evidence" value="ECO:0007669"/>
    <property type="project" value="UniProtKB-UniRule"/>
</dbReference>
<dbReference type="GO" id="GO:0016114">
    <property type="term" value="P:terpenoid biosynthetic process"/>
    <property type="evidence" value="ECO:0007669"/>
    <property type="project" value="InterPro"/>
</dbReference>
<dbReference type="Gene3D" id="3.30.230.10">
    <property type="match status" value="1"/>
</dbReference>
<dbReference type="Gene3D" id="3.30.70.890">
    <property type="entry name" value="GHMP kinase, C-terminal domain"/>
    <property type="match status" value="1"/>
</dbReference>
<dbReference type="HAMAP" id="MF_00061">
    <property type="entry name" value="IspE"/>
    <property type="match status" value="1"/>
</dbReference>
<dbReference type="InterPro" id="IPR013750">
    <property type="entry name" value="GHMP_kinase_C_dom"/>
</dbReference>
<dbReference type="InterPro" id="IPR036554">
    <property type="entry name" value="GHMP_kinase_C_sf"/>
</dbReference>
<dbReference type="InterPro" id="IPR006204">
    <property type="entry name" value="GHMP_kinase_N_dom"/>
</dbReference>
<dbReference type="InterPro" id="IPR004424">
    <property type="entry name" value="IspE"/>
</dbReference>
<dbReference type="InterPro" id="IPR020568">
    <property type="entry name" value="Ribosomal_Su5_D2-typ_SF"/>
</dbReference>
<dbReference type="InterPro" id="IPR014721">
    <property type="entry name" value="Ribsml_uS5_D2-typ_fold_subgr"/>
</dbReference>
<dbReference type="NCBIfam" id="TIGR00154">
    <property type="entry name" value="ispE"/>
    <property type="match status" value="1"/>
</dbReference>
<dbReference type="PANTHER" id="PTHR43527">
    <property type="entry name" value="4-DIPHOSPHOCYTIDYL-2-C-METHYL-D-ERYTHRITOL KINASE, CHLOROPLASTIC"/>
    <property type="match status" value="1"/>
</dbReference>
<dbReference type="PANTHER" id="PTHR43527:SF2">
    <property type="entry name" value="4-DIPHOSPHOCYTIDYL-2-C-METHYL-D-ERYTHRITOL KINASE, CHLOROPLASTIC"/>
    <property type="match status" value="1"/>
</dbReference>
<dbReference type="Pfam" id="PF08544">
    <property type="entry name" value="GHMP_kinases_C"/>
    <property type="match status" value="1"/>
</dbReference>
<dbReference type="Pfam" id="PF00288">
    <property type="entry name" value="GHMP_kinases_N"/>
    <property type="match status" value="1"/>
</dbReference>
<dbReference type="PIRSF" id="PIRSF010376">
    <property type="entry name" value="IspE"/>
    <property type="match status" value="1"/>
</dbReference>
<dbReference type="SUPFAM" id="SSF55060">
    <property type="entry name" value="GHMP Kinase, C-terminal domain"/>
    <property type="match status" value="1"/>
</dbReference>
<dbReference type="SUPFAM" id="SSF54211">
    <property type="entry name" value="Ribosomal protein S5 domain 2-like"/>
    <property type="match status" value="1"/>
</dbReference>
<gene>
    <name evidence="1" type="primary">ispE</name>
    <name type="ordered locus">Bphy_0316</name>
</gene>
<accession>B2JCP0</accession>
<protein>
    <recommendedName>
        <fullName evidence="1">4-diphosphocytidyl-2-C-methyl-D-erythritol kinase</fullName>
        <shortName evidence="1">CMK</shortName>
        <ecNumber evidence="1">2.7.1.148</ecNumber>
    </recommendedName>
    <alternativeName>
        <fullName evidence="1">4-(cytidine-5'-diphospho)-2-C-methyl-D-erythritol kinase</fullName>
    </alternativeName>
</protein>
<comment type="function">
    <text evidence="1">Catalyzes the phosphorylation of the position 2 hydroxy group of 4-diphosphocytidyl-2C-methyl-D-erythritol.</text>
</comment>
<comment type="catalytic activity">
    <reaction evidence="1">
        <text>4-CDP-2-C-methyl-D-erythritol + ATP = 4-CDP-2-C-methyl-D-erythritol 2-phosphate + ADP + H(+)</text>
        <dbReference type="Rhea" id="RHEA:18437"/>
        <dbReference type="ChEBI" id="CHEBI:15378"/>
        <dbReference type="ChEBI" id="CHEBI:30616"/>
        <dbReference type="ChEBI" id="CHEBI:57823"/>
        <dbReference type="ChEBI" id="CHEBI:57919"/>
        <dbReference type="ChEBI" id="CHEBI:456216"/>
        <dbReference type="EC" id="2.7.1.148"/>
    </reaction>
</comment>
<comment type="pathway">
    <text evidence="1">Isoprenoid biosynthesis; isopentenyl diphosphate biosynthesis via DXP pathway; isopentenyl diphosphate from 1-deoxy-D-xylulose 5-phosphate: step 3/6.</text>
</comment>
<comment type="similarity">
    <text evidence="1">Belongs to the GHMP kinase family. IspE subfamily.</text>
</comment>
<proteinExistence type="inferred from homology"/>
<name>ISPE_PARP8</name>
<feature type="chain" id="PRO_1000092068" description="4-diphosphocytidyl-2-C-methyl-D-erythritol kinase">
    <location>
        <begin position="1"/>
        <end position="293"/>
    </location>
</feature>
<feature type="active site" evidence="1">
    <location>
        <position position="16"/>
    </location>
</feature>
<feature type="active site" evidence="1">
    <location>
        <position position="141"/>
    </location>
</feature>
<feature type="binding site" evidence="1">
    <location>
        <begin position="99"/>
        <end position="109"/>
    </location>
    <ligand>
        <name>ATP</name>
        <dbReference type="ChEBI" id="CHEBI:30616"/>
    </ligand>
</feature>
<reference key="1">
    <citation type="journal article" date="2014" name="Stand. Genomic Sci.">
        <title>Complete genome sequence of Burkholderia phymatum STM815(T), a broad host range and efficient nitrogen-fixing symbiont of Mimosa species.</title>
        <authorList>
            <person name="Moulin L."/>
            <person name="Klonowska A."/>
            <person name="Caroline B."/>
            <person name="Booth K."/>
            <person name="Vriezen J.A."/>
            <person name="Melkonian R."/>
            <person name="James E.K."/>
            <person name="Young J.P."/>
            <person name="Bena G."/>
            <person name="Hauser L."/>
            <person name="Land M."/>
            <person name="Kyrpides N."/>
            <person name="Bruce D."/>
            <person name="Chain P."/>
            <person name="Copeland A."/>
            <person name="Pitluck S."/>
            <person name="Woyke T."/>
            <person name="Lizotte-Waniewski M."/>
            <person name="Bristow J."/>
            <person name="Riley M."/>
        </authorList>
    </citation>
    <scope>NUCLEOTIDE SEQUENCE [LARGE SCALE GENOMIC DNA]</scope>
    <source>
        <strain>DSM 17167 / CIP 108236 / LMG 21445 / STM815</strain>
    </source>
</reference>
<sequence>MIETNDSLRDCLAPAKLNLFLHITGRLPNGYHALQTVFQLLDWGDTLHFTRRDDGAITRGTDIVDVPADADLTVRAAKLLKEHTGTREGVNIEIDKRLPMGAGLGGGSSDAATTLLALNRLWKLNLPRAELQVLSVKLGADVPFFVFGKNAFAEGIGEELEQVQLPPRHFLVVTPRVHVPTSAIFSEKELTRDTKPLTIADFLAQHSCSAEWPDSFGRNDMQQVVAGKYAEVAQVLRWFDNIAPARMTGSGASVFAAFRSKDEAVAAHAKLPVGWSGAVTASLDTHPLFAFAA</sequence>
<keyword id="KW-0067">ATP-binding</keyword>
<keyword id="KW-0414">Isoprene biosynthesis</keyword>
<keyword id="KW-0418">Kinase</keyword>
<keyword id="KW-0547">Nucleotide-binding</keyword>
<keyword id="KW-1185">Reference proteome</keyword>
<keyword id="KW-0808">Transferase</keyword>